<sequence>MFQAAVGPLQTNISLPEETPGLELNWAALLIVMVIIPTIGGNILVILAVWLEKKLQNATNFFLMSLAVADLLVGLLVMPIALITILYDSDWPLPEPLCPIWLFLDVLFSTASIMHLCAISLDRYIAIKKPIQHSQYKSRAKVMLKIALVWLISICIAIPIPIKGLRNYPHPNNITFTSNHTCVLKTDTFQEFIIFGSLVAFFIPLTIMMIIYFLTVRVLRKKVYLLRSKVTQRFSYPIISTVFQREQAANPPQPEQPDSTGNSLARIQEKTDTDGMSSPTGDEKSFRRLSTMGKKSMQTLTNEQRASKVLGIVFLLFVVMWCPFFITNITSALCGPCDANIIGRLMEIFSWVGYVSSGINPLVYTLFNKTFRQAFTRYITCNYRNFASKEQGRSFRASTVDRMLTHISPRSSVAENAKLFTKQEIKNETTDYRSPLGCLQPSAQTSTGVVLDKILLTHTENCKQEERVSCV</sequence>
<protein>
    <recommendedName>
        <fullName>5-hydroxytryptamine receptor 2B</fullName>
        <shortName>5-HT-2B</shortName>
        <shortName>5-HT2B</shortName>
    </recommendedName>
    <alternativeName>
        <fullName>Serotonin receptor 2B</fullName>
    </alternativeName>
</protein>
<accession>Q8UUG8</accession>
<accession>Q8UUP7</accession>
<accession>Q8UUP8</accession>
<accession>Q8UUP9</accession>
<accession>Q8UUQ0</accession>
<accession>Q8UUQ1</accession>
<dbReference type="EMBL" id="AJ315179">
    <property type="protein sequence ID" value="CAC86245.1"/>
    <property type="molecule type" value="Genomic_DNA"/>
</dbReference>
<dbReference type="EMBL" id="AJ315180">
    <property type="protein sequence ID" value="CAC86246.1"/>
    <property type="molecule type" value="mRNA"/>
</dbReference>
<dbReference type="EMBL" id="AJ315181">
    <property type="protein sequence ID" value="CAC86247.1"/>
    <property type="molecule type" value="mRNA"/>
</dbReference>
<dbReference type="EMBL" id="AJ315182">
    <property type="protein sequence ID" value="CAC86248.1"/>
    <property type="molecule type" value="mRNA"/>
</dbReference>
<dbReference type="EMBL" id="AJ315183">
    <property type="protein sequence ID" value="CAC86249.1"/>
    <property type="molecule type" value="mRNA"/>
</dbReference>
<dbReference type="EMBL" id="AJ320211">
    <property type="protein sequence ID" value="CAC85962.1"/>
    <property type="molecule type" value="mRNA"/>
</dbReference>
<dbReference type="EMBL" id="AJ320212">
    <property type="protein sequence ID" value="CAC85912.1"/>
    <property type="molecule type" value="mRNA"/>
</dbReference>
<dbReference type="SMR" id="Q8UUG8"/>
<dbReference type="GlyCosmos" id="Q8UUG8">
    <property type="glycosylation" value="3 sites, No reported glycans"/>
</dbReference>
<dbReference type="GO" id="GO:0030425">
    <property type="term" value="C:dendrite"/>
    <property type="evidence" value="ECO:0007669"/>
    <property type="project" value="TreeGrafter"/>
</dbReference>
<dbReference type="GO" id="GO:0005886">
    <property type="term" value="C:plasma membrane"/>
    <property type="evidence" value="ECO:0007669"/>
    <property type="project" value="UniProtKB-SubCell"/>
</dbReference>
<dbReference type="GO" id="GO:0045202">
    <property type="term" value="C:synapse"/>
    <property type="evidence" value="ECO:0007669"/>
    <property type="project" value="UniProtKB-SubCell"/>
</dbReference>
<dbReference type="GO" id="GO:0001587">
    <property type="term" value="F:Gq/11-coupled serotonin receptor activity"/>
    <property type="evidence" value="ECO:0000303"/>
    <property type="project" value="UniProtKB"/>
</dbReference>
<dbReference type="GO" id="GO:0030594">
    <property type="term" value="F:neurotransmitter receptor activity"/>
    <property type="evidence" value="ECO:0000303"/>
    <property type="project" value="UniProtKB"/>
</dbReference>
<dbReference type="GO" id="GO:0007268">
    <property type="term" value="P:chemical synaptic transmission"/>
    <property type="evidence" value="ECO:0007669"/>
    <property type="project" value="TreeGrafter"/>
</dbReference>
<dbReference type="GO" id="GO:0048598">
    <property type="term" value="P:embryonic morphogenesis"/>
    <property type="evidence" value="ECO:0000304"/>
    <property type="project" value="UniProtKB"/>
</dbReference>
<dbReference type="GO" id="GO:0007187">
    <property type="term" value="P:G protein-coupled receptor signaling pathway, coupled to cyclic nucleotide second messenger"/>
    <property type="evidence" value="ECO:0007669"/>
    <property type="project" value="TreeGrafter"/>
</dbReference>
<dbReference type="GO" id="GO:0007507">
    <property type="term" value="P:heart development"/>
    <property type="evidence" value="ECO:0007669"/>
    <property type="project" value="InterPro"/>
</dbReference>
<dbReference type="GO" id="GO:0007208">
    <property type="term" value="P:phospholipase C-activating serotonin receptor signaling pathway"/>
    <property type="evidence" value="ECO:0007669"/>
    <property type="project" value="TreeGrafter"/>
</dbReference>
<dbReference type="GO" id="GO:0050795">
    <property type="term" value="P:regulation of behavior"/>
    <property type="evidence" value="ECO:0007669"/>
    <property type="project" value="InterPro"/>
</dbReference>
<dbReference type="GO" id="GO:0051209">
    <property type="term" value="P:release of sequestered calcium ion into cytosol"/>
    <property type="evidence" value="ECO:0007669"/>
    <property type="project" value="TreeGrafter"/>
</dbReference>
<dbReference type="GO" id="GO:0007210">
    <property type="term" value="P:serotonin receptor signaling pathway"/>
    <property type="evidence" value="ECO:0007669"/>
    <property type="project" value="TreeGrafter"/>
</dbReference>
<dbReference type="GO" id="GO:0006939">
    <property type="term" value="P:smooth muscle contraction"/>
    <property type="evidence" value="ECO:0007669"/>
    <property type="project" value="InterPro"/>
</dbReference>
<dbReference type="GO" id="GO:0042310">
    <property type="term" value="P:vasoconstriction"/>
    <property type="evidence" value="ECO:0007669"/>
    <property type="project" value="InterPro"/>
</dbReference>
<dbReference type="CDD" id="cd15306">
    <property type="entry name" value="7tmA_5-HT2B"/>
    <property type="match status" value="1"/>
</dbReference>
<dbReference type="Gene3D" id="1.20.1070.10">
    <property type="entry name" value="Rhodopsin 7-helix transmembrane proteins"/>
    <property type="match status" value="1"/>
</dbReference>
<dbReference type="InterPro" id="IPR000482">
    <property type="entry name" value="5HT2B_rcpt"/>
</dbReference>
<dbReference type="InterPro" id="IPR002231">
    <property type="entry name" value="5HT_rcpt"/>
</dbReference>
<dbReference type="InterPro" id="IPR000276">
    <property type="entry name" value="GPCR_Rhodpsn"/>
</dbReference>
<dbReference type="InterPro" id="IPR017452">
    <property type="entry name" value="GPCR_Rhodpsn_7TM"/>
</dbReference>
<dbReference type="PANTHER" id="PTHR24247">
    <property type="entry name" value="5-HYDROXYTRYPTAMINE RECEPTOR"/>
    <property type="match status" value="1"/>
</dbReference>
<dbReference type="PANTHER" id="PTHR24247:SF31">
    <property type="entry name" value="5-HYDROXYTRYPTAMINE RECEPTOR 2B"/>
    <property type="match status" value="1"/>
</dbReference>
<dbReference type="Pfam" id="PF00001">
    <property type="entry name" value="7tm_1"/>
    <property type="match status" value="1"/>
</dbReference>
<dbReference type="PRINTS" id="PR00651">
    <property type="entry name" value="5HT2BRECEPTR"/>
</dbReference>
<dbReference type="PRINTS" id="PR01101">
    <property type="entry name" value="5HTRECEPTOR"/>
</dbReference>
<dbReference type="PRINTS" id="PR00237">
    <property type="entry name" value="GPCRRHODOPSN"/>
</dbReference>
<dbReference type="SMART" id="SM01381">
    <property type="entry name" value="7TM_GPCR_Srsx"/>
    <property type="match status" value="1"/>
</dbReference>
<dbReference type="SUPFAM" id="SSF81321">
    <property type="entry name" value="Family A G protein-coupled receptor-like"/>
    <property type="match status" value="1"/>
</dbReference>
<dbReference type="PROSITE" id="PS00237">
    <property type="entry name" value="G_PROTEIN_RECEP_F1_1"/>
    <property type="match status" value="1"/>
</dbReference>
<dbReference type="PROSITE" id="PS50262">
    <property type="entry name" value="G_PROTEIN_RECEP_F1_2"/>
    <property type="match status" value="1"/>
</dbReference>
<evidence type="ECO:0000250" key="1">
    <source>
        <dbReference type="UniProtKB" id="P41595"/>
    </source>
</evidence>
<evidence type="ECO:0000250" key="2">
    <source>
        <dbReference type="UniProtKB" id="Q02152"/>
    </source>
</evidence>
<evidence type="ECO:0000255" key="3"/>
<evidence type="ECO:0000255" key="4">
    <source>
        <dbReference type="PROSITE-ProRule" id="PRU00521"/>
    </source>
</evidence>
<evidence type="ECO:0000269" key="5">
    <source>
    </source>
</evidence>
<evidence type="ECO:0000303" key="6">
    <source>
    </source>
</evidence>
<evidence type="ECO:0000305" key="7"/>
<evidence type="ECO:0000312" key="8">
    <source>
        <dbReference type="EMBL" id="CAC85962.1"/>
    </source>
</evidence>
<comment type="function">
    <text evidence="1 2">G-protein coupled receptor for 5-hydroxytryptamine (serotonin). Also functions as a receptor for various ergot alkaloid derivatives and psychoactive substances. Ligand binding causes a conformation change that triggers signaling via guanine nucleotide-binding proteins (G proteins) and modulates the activity of downstream effectors. HTR2B is coupled to G(q)/G(11) G alpha proteins and activates phospholipase C-beta, releasing diacylglycerol (DAG) and inositol 1,4,5-trisphosphate (IP3) second messengers that modulate the activity of phosphatidylinositol 3-kinase and promote the release of Ca(2+) ions from intracellular stores, respectively. Beta-arrestin family members inhibit signaling via G proteins and mediate activation of alternative signaling pathways (By similarity). Plays a role in the regulation of dopamine and 5-hydroxytryptamine release, 5-hydroxytryptamine uptake and in the regulation of extracellular dopamine and 5-hydroxytryptamine levels, and thereby affects neural activity (By similarity).</text>
</comment>
<comment type="subcellular location">
    <subcellularLocation>
        <location evidence="1">Cell membrane</location>
        <topology evidence="1">Multi-pass membrane protein</topology>
    </subcellularLocation>
    <subcellularLocation>
        <location evidence="2">Synapse</location>
        <location evidence="2">Synaptosome</location>
    </subcellularLocation>
</comment>
<comment type="alternative products">
    <event type="alternative splicing"/>
    <isoform>
        <id>Q8UUG8-1</id>
        <name evidence="5">1</name>
        <sequence type="displayed"/>
    </isoform>
    <isoform>
        <id>Q8UUG8-2</id>
        <name evidence="5">2</name>
        <sequence type="described" ref="VSP_052051"/>
    </isoform>
    <isoform>
        <id>Q8UUG8-3</id>
        <name evidence="5">3</name>
        <sequence type="described" ref="VSP_052052 VSP_052053"/>
    </isoform>
    <isoform>
        <id>Q8UUG8-4</id>
        <name evidence="5">4</name>
        <sequence type="described" ref="VSP_052050"/>
    </isoform>
</comment>
<comment type="tissue specificity">
    <text evidence="5">Detected in brain, heart and gut.</text>
</comment>
<comment type="domain">
    <text evidence="1">Ligands are bound in a hydrophobic pocket formed by the transmembrane helices.</text>
</comment>
<comment type="similarity">
    <text evidence="4">Belongs to the G-protein coupled receptor 1 family.</text>
</comment>
<organism>
    <name type="scientific">Dichotomyctere fluviatilis</name>
    <name type="common">Green pufferfish</name>
    <name type="synonym">Tetraodon fluviatilis</name>
    <dbReference type="NCBI Taxonomy" id="2593188"/>
    <lineage>
        <taxon>Eukaryota</taxon>
        <taxon>Metazoa</taxon>
        <taxon>Chordata</taxon>
        <taxon>Craniata</taxon>
        <taxon>Vertebrata</taxon>
        <taxon>Euteleostomi</taxon>
        <taxon>Actinopterygii</taxon>
        <taxon>Neopterygii</taxon>
        <taxon>Teleostei</taxon>
        <taxon>Neoteleostei</taxon>
        <taxon>Acanthomorphata</taxon>
        <taxon>Eupercaria</taxon>
        <taxon>Tetraodontiformes</taxon>
        <taxon>Tetradontoidea</taxon>
        <taxon>Tetraodontidae</taxon>
        <taxon>Dichotomyctere</taxon>
    </lineage>
</organism>
<reference evidence="7 8" key="1">
    <citation type="journal article" date="2001" name="Brain Res. Mol. Brain Res.">
        <title>The serotonin 5-HT2B receptor from the puffer fish Tetraodon fluviatilis: cDNA cloning, genomic organization and alternatively spliced variants.</title>
        <authorList>
            <person name="De Lucchini S."/>
            <person name="Marracci S."/>
            <person name="Nardi I."/>
        </authorList>
    </citation>
    <scope>NUCLEOTIDE SEQUENCE [GENOMIC DNA / MRNA] (ISOFORMS 1; 2; 3 AND 4)</scope>
    <scope>TISSUE SPECIFICITY</scope>
    <source>
        <tissue>Intestine</tissue>
    </source>
</reference>
<keyword id="KW-0025">Alternative splicing</keyword>
<keyword id="KW-0085">Behavior</keyword>
<keyword id="KW-1003">Cell membrane</keyword>
<keyword id="KW-1015">Disulfide bond</keyword>
<keyword id="KW-0297">G-protein coupled receptor</keyword>
<keyword id="KW-0325">Glycoprotein</keyword>
<keyword id="KW-0449">Lipoprotein</keyword>
<keyword id="KW-0472">Membrane</keyword>
<keyword id="KW-0564">Palmitate</keyword>
<keyword id="KW-0675">Receptor</keyword>
<keyword id="KW-0770">Synapse</keyword>
<keyword id="KW-0771">Synaptosome</keyword>
<keyword id="KW-0807">Transducer</keyword>
<keyword id="KW-0812">Transmembrane</keyword>
<keyword id="KW-1133">Transmembrane helix</keyword>
<name>5HT2B_DICFU</name>
<feature type="chain" id="PRO_0000239461" description="5-hydroxytryptamine receptor 2B">
    <location>
        <begin position="1"/>
        <end position="471"/>
    </location>
</feature>
<feature type="topological domain" description="Extracellular" evidence="1">
    <location>
        <begin position="1"/>
        <end position="26"/>
    </location>
</feature>
<feature type="transmembrane region" description="Helical; Name=1" evidence="1">
    <location>
        <begin position="27"/>
        <end position="49"/>
    </location>
</feature>
<feature type="topological domain" description="Cytoplasmic" evidence="1">
    <location>
        <begin position="50"/>
        <end position="60"/>
    </location>
</feature>
<feature type="transmembrane region" description="Helical; Name=2" evidence="1">
    <location>
        <begin position="61"/>
        <end position="83"/>
    </location>
</feature>
<feature type="topological domain" description="Extracellular" evidence="1">
    <location>
        <begin position="84"/>
        <end position="99"/>
    </location>
</feature>
<feature type="transmembrane region" description="Helical; Name=3" evidence="1">
    <location>
        <begin position="100"/>
        <end position="121"/>
    </location>
</feature>
<feature type="topological domain" description="Cytoplasmic" evidence="1">
    <location>
        <begin position="122"/>
        <end position="141"/>
    </location>
</feature>
<feature type="transmembrane region" description="Helical; Name=4" evidence="1">
    <location>
        <begin position="142"/>
        <end position="162"/>
    </location>
</feature>
<feature type="topological domain" description="Extracellular" evidence="1">
    <location>
        <begin position="163"/>
        <end position="191"/>
    </location>
</feature>
<feature type="transmembrane region" description="Helical; Name=5" evidence="1">
    <location>
        <begin position="192"/>
        <end position="214"/>
    </location>
</feature>
<feature type="topological domain" description="Cytoplasmic" evidence="1">
    <location>
        <begin position="215"/>
        <end position="308"/>
    </location>
</feature>
<feature type="transmembrane region" description="Helical; Name=6" evidence="1">
    <location>
        <begin position="309"/>
        <end position="329"/>
    </location>
</feature>
<feature type="topological domain" description="Extracellular" evidence="1">
    <location>
        <begin position="330"/>
        <end position="344"/>
    </location>
</feature>
<feature type="transmembrane region" description="Helical; Name=7" evidence="1">
    <location>
        <begin position="345"/>
        <end position="366"/>
    </location>
</feature>
<feature type="topological domain" description="Cytoplasmic" evidence="1">
    <location>
        <begin position="367"/>
        <end position="471"/>
    </location>
</feature>
<feature type="short sequence motif" description="DRY motif; important for ligand-induced conformation changes" evidence="1">
    <location>
        <begin position="122"/>
        <end position="124"/>
    </location>
</feature>
<feature type="short sequence motif" description="[DE]RFG motif; may stabilize a conformation that preferentially activates signaling via beta-arrestin family members" evidence="1">
    <location>
        <begin position="187"/>
        <end position="190"/>
    </location>
</feature>
<feature type="short sequence motif" description="NPxxY motif; important for ligand-induced conformation changes and signaling" evidence="1">
    <location>
        <begin position="360"/>
        <end position="364"/>
    </location>
</feature>
<feature type="short sequence motif" description="PDZ-binding" evidence="1">
    <location>
        <begin position="469"/>
        <end position="471"/>
    </location>
</feature>
<feature type="binding site" evidence="1">
    <location>
        <position position="105"/>
    </location>
    <ligand>
        <name>ergotamine</name>
        <dbReference type="ChEBI" id="CHEBI:190463"/>
        <note>agonist</note>
    </ligand>
</feature>
<feature type="binding site" evidence="1">
    <location>
        <position position="110"/>
    </location>
    <ligand>
        <name>ergotamine</name>
        <dbReference type="ChEBI" id="CHEBI:190463"/>
        <note>agonist</note>
    </ligand>
</feature>
<feature type="binding site" evidence="1">
    <location>
        <position position="184"/>
    </location>
    <ligand>
        <name>ergotamine</name>
        <dbReference type="ChEBI" id="CHEBI:190463"/>
        <note>agonist</note>
    </ligand>
</feature>
<feature type="site" description="Hydrophobic barrier that decreases the speed of ligand binding and dissociation" evidence="1">
    <location>
        <position position="184"/>
    </location>
</feature>
<feature type="lipid moiety-binding region" description="S-palmitoyl cysteine" evidence="3">
    <location>
        <position position="381"/>
    </location>
</feature>
<feature type="glycosylation site" description="N-linked (GlcNAc...) asparagine" evidence="3">
    <location>
        <position position="12"/>
    </location>
</feature>
<feature type="glycosylation site" description="N-linked (GlcNAc...) asparagine" evidence="3">
    <location>
        <position position="173"/>
    </location>
</feature>
<feature type="glycosylation site" description="N-linked (GlcNAc...) asparagine" evidence="3">
    <location>
        <position position="179"/>
    </location>
</feature>
<feature type="disulfide bond" evidence="4">
    <location>
        <begin position="98"/>
        <end position="182"/>
    </location>
</feature>
<feature type="disulfide bond" evidence="4">
    <location>
        <begin position="334"/>
        <end position="337"/>
    </location>
</feature>
<feature type="splice variant" id="VSP_052050" description="In isoform 4." evidence="6">
    <location>
        <begin position="32"/>
        <end position="471"/>
    </location>
</feature>
<feature type="splice variant" id="VSP_052051" description="In isoform 2." evidence="6">
    <original>DSDWPLPEPLCPIWLFLDVLFSTASIMHLCAISLDRYIAIKKPIQHSQYKSRAKVMLKIALVWLISIC</original>
    <variation>G</variation>
    <location>
        <begin position="88"/>
        <end position="155"/>
    </location>
</feature>
<feature type="splice variant" id="VSP_052052" description="In isoform 3." evidence="6">
    <original>WLISICIAIPIPIKGLRNYPHPNNITFT</original>
    <variation>LQSQFQLRGLGTTLILTTSPLPVTIHAC</variation>
    <location>
        <begin position="150"/>
        <end position="177"/>
    </location>
</feature>
<feature type="splice variant" id="VSP_052053" description="In isoform 3." evidence="6">
    <location>
        <begin position="178"/>
        <end position="471"/>
    </location>
</feature>
<feature type="sequence conflict" description="In Ref. 1; CAC86249." evidence="7" ref="1">
    <original>A</original>
    <variation>V</variation>
    <location>
        <position position="5"/>
    </location>
</feature>
<feature type="sequence conflict" description="In Ref. 1; CAC86249." evidence="7" ref="1">
    <original>P</original>
    <variation>L</variation>
    <location>
        <position position="20"/>
    </location>
</feature>
<feature type="sequence conflict" description="In Ref. 1; CAC86247." evidence="7" ref="1">
    <original>F</original>
    <variation>L</variation>
    <location>
        <position position="213"/>
    </location>
</feature>
<feature type="sequence conflict" description="In Ref. 1; CAC86247." evidence="7" ref="1">
    <original>R</original>
    <variation>H</variation>
    <location>
        <position position="220"/>
    </location>
</feature>
<feature type="sequence conflict" description="In Ref. 1; CAC86247." evidence="7" ref="1">
    <original>V</original>
    <variation>G</variation>
    <location>
        <position position="242"/>
    </location>
</feature>
<feature type="sequence conflict" description="In Ref. 1; CAC86247." evidence="7" ref="1">
    <original>P</original>
    <variation>S</variation>
    <location>
        <position position="254"/>
    </location>
</feature>
<feature type="sequence conflict" description="In Ref. 1; CAC86247." evidence="7" ref="1">
    <original>G</original>
    <variation>D</variation>
    <location>
        <position position="261"/>
    </location>
</feature>
<gene>
    <name type="primary">htr2b</name>
</gene>
<proteinExistence type="evidence at transcript level"/>